<dbReference type="EMBL" id="AE000516">
    <property type="protein sequence ID" value="AAK44982.1"/>
    <property type="molecule type" value="Genomic_DNA"/>
</dbReference>
<dbReference type="PIR" id="F70644">
    <property type="entry name" value="F70644"/>
</dbReference>
<dbReference type="RefSeq" id="WP_003898563.1">
    <property type="nucleotide sequence ID" value="NZ_KK341227.1"/>
</dbReference>
<dbReference type="SMR" id="P9WHD6"/>
<dbReference type="KEGG" id="mtc:MT0748"/>
<dbReference type="PATRIC" id="fig|83331.31.peg.801"/>
<dbReference type="HOGENOM" id="CLU_055188_4_1_11"/>
<dbReference type="Proteomes" id="UP000001020">
    <property type="component" value="Chromosome"/>
</dbReference>
<dbReference type="GO" id="GO:0022625">
    <property type="term" value="C:cytosolic large ribosomal subunit"/>
    <property type="evidence" value="ECO:0007669"/>
    <property type="project" value="TreeGrafter"/>
</dbReference>
<dbReference type="GO" id="GO:0019843">
    <property type="term" value="F:rRNA binding"/>
    <property type="evidence" value="ECO:0007669"/>
    <property type="project" value="UniProtKB-UniRule"/>
</dbReference>
<dbReference type="GO" id="GO:0003735">
    <property type="term" value="F:structural constituent of ribosome"/>
    <property type="evidence" value="ECO:0007669"/>
    <property type="project" value="InterPro"/>
</dbReference>
<dbReference type="GO" id="GO:0006412">
    <property type="term" value="P:translation"/>
    <property type="evidence" value="ECO:0007669"/>
    <property type="project" value="UniProtKB-UniRule"/>
</dbReference>
<dbReference type="FunFam" id="3.100.10.10:FF:000005">
    <property type="entry name" value="50S ribosomal protein L15"/>
    <property type="match status" value="1"/>
</dbReference>
<dbReference type="Gene3D" id="3.100.10.10">
    <property type="match status" value="1"/>
</dbReference>
<dbReference type="HAMAP" id="MF_01341">
    <property type="entry name" value="Ribosomal_uL15"/>
    <property type="match status" value="1"/>
</dbReference>
<dbReference type="InterPro" id="IPR030878">
    <property type="entry name" value="Ribosomal_uL15"/>
</dbReference>
<dbReference type="InterPro" id="IPR021131">
    <property type="entry name" value="Ribosomal_uL15/eL18"/>
</dbReference>
<dbReference type="InterPro" id="IPR036227">
    <property type="entry name" value="Ribosomal_uL15/eL18_sf"/>
</dbReference>
<dbReference type="InterPro" id="IPR005749">
    <property type="entry name" value="Ribosomal_uL15_bac-type"/>
</dbReference>
<dbReference type="InterPro" id="IPR001196">
    <property type="entry name" value="Ribosomal_uL15_CS"/>
</dbReference>
<dbReference type="NCBIfam" id="TIGR01071">
    <property type="entry name" value="rplO_bact"/>
    <property type="match status" value="1"/>
</dbReference>
<dbReference type="PANTHER" id="PTHR12934">
    <property type="entry name" value="50S RIBOSOMAL PROTEIN L15"/>
    <property type="match status" value="1"/>
</dbReference>
<dbReference type="PANTHER" id="PTHR12934:SF11">
    <property type="entry name" value="LARGE RIBOSOMAL SUBUNIT PROTEIN UL15M"/>
    <property type="match status" value="1"/>
</dbReference>
<dbReference type="Pfam" id="PF00828">
    <property type="entry name" value="Ribosomal_L27A"/>
    <property type="match status" value="1"/>
</dbReference>
<dbReference type="SUPFAM" id="SSF52080">
    <property type="entry name" value="Ribosomal proteins L15p and L18e"/>
    <property type="match status" value="1"/>
</dbReference>
<dbReference type="PROSITE" id="PS00475">
    <property type="entry name" value="RIBOSOMAL_L15"/>
    <property type="match status" value="1"/>
</dbReference>
<reference key="1">
    <citation type="journal article" date="2002" name="J. Bacteriol.">
        <title>Whole-genome comparison of Mycobacterium tuberculosis clinical and laboratory strains.</title>
        <authorList>
            <person name="Fleischmann R.D."/>
            <person name="Alland D."/>
            <person name="Eisen J.A."/>
            <person name="Carpenter L."/>
            <person name="White O."/>
            <person name="Peterson J.D."/>
            <person name="DeBoy R.T."/>
            <person name="Dodson R.J."/>
            <person name="Gwinn M.L."/>
            <person name="Haft D.H."/>
            <person name="Hickey E.K."/>
            <person name="Kolonay J.F."/>
            <person name="Nelson W.C."/>
            <person name="Umayam L.A."/>
            <person name="Ermolaeva M.D."/>
            <person name="Salzberg S.L."/>
            <person name="Delcher A."/>
            <person name="Utterback T.R."/>
            <person name="Weidman J.F."/>
            <person name="Khouri H.M."/>
            <person name="Gill J."/>
            <person name="Mikula A."/>
            <person name="Bishai W."/>
            <person name="Jacobs W.R. Jr."/>
            <person name="Venter J.C."/>
            <person name="Fraser C.M."/>
        </authorList>
    </citation>
    <scope>NUCLEOTIDE SEQUENCE [LARGE SCALE GENOMIC DNA]</scope>
    <source>
        <strain>CDC 1551 / Oshkosh</strain>
    </source>
</reference>
<proteinExistence type="inferred from homology"/>
<gene>
    <name evidence="1" type="primary">rplO</name>
    <name type="ordered locus">MT0748</name>
</gene>
<keyword id="KW-1185">Reference proteome</keyword>
<keyword id="KW-0687">Ribonucleoprotein</keyword>
<keyword id="KW-0689">Ribosomal protein</keyword>
<keyword id="KW-0694">RNA-binding</keyword>
<keyword id="KW-0699">rRNA-binding</keyword>
<evidence type="ECO:0000255" key="1">
    <source>
        <dbReference type="HAMAP-Rule" id="MF_01341"/>
    </source>
</evidence>
<evidence type="ECO:0000256" key="2">
    <source>
        <dbReference type="SAM" id="MobiDB-lite"/>
    </source>
</evidence>
<evidence type="ECO:0000305" key="3"/>
<comment type="function">
    <text evidence="1">Binds to the 23S rRNA.</text>
</comment>
<comment type="subunit">
    <text evidence="1">Part of the 50S ribosomal subunit.</text>
</comment>
<comment type="similarity">
    <text evidence="1">Belongs to the universal ribosomal protein uL15 family.</text>
</comment>
<feature type="chain" id="PRO_0000428205" description="Large ribosomal subunit protein uL15">
    <location>
        <begin position="1"/>
        <end position="146"/>
    </location>
</feature>
<feature type="region of interest" description="Disordered" evidence="2">
    <location>
        <begin position="1"/>
        <end position="41"/>
    </location>
</feature>
<feature type="compositionally biased region" description="Basic and acidic residues" evidence="2">
    <location>
        <begin position="1"/>
        <end position="10"/>
    </location>
</feature>
<organism>
    <name type="scientific">Mycobacterium tuberculosis (strain CDC 1551 / Oshkosh)</name>
    <dbReference type="NCBI Taxonomy" id="83331"/>
    <lineage>
        <taxon>Bacteria</taxon>
        <taxon>Bacillati</taxon>
        <taxon>Actinomycetota</taxon>
        <taxon>Actinomycetes</taxon>
        <taxon>Mycobacteriales</taxon>
        <taxon>Mycobacteriaceae</taxon>
        <taxon>Mycobacterium</taxon>
        <taxon>Mycobacterium tuberculosis complex</taxon>
    </lineage>
</organism>
<name>RL15_MYCTO</name>
<sequence length="146" mass="15533">MTLKLHDLRPARGSKIARTRVGRGDGSKGKTAGRGTKGTRARKQVPVTFEGGQMPIHMRLPKLKGFRNRFRTEYEIVNVGDINRLFPQGGAVGVDDLVAKGAVRKNALVKVLGDGKLTAKVDVSAHKFSGSARAKITAAGGSATEL</sequence>
<protein>
    <recommendedName>
        <fullName evidence="1">Large ribosomal subunit protein uL15</fullName>
    </recommendedName>
    <alternativeName>
        <fullName evidence="3">50S ribosomal protein L15</fullName>
    </alternativeName>
</protein>
<accession>P9WHD6</accession>
<accession>L0T7I9</accession>
<accession>P95071</accession>